<gene>
    <name evidence="1" type="primary">rpl5</name>
    <name type="ordered locus">HQ_2829A</name>
</gene>
<sequence length="185" mass="20314">MSETDSTFHEMREPQLEKVVVHMAVGEGGRELANAEEILQEIAGQTAVRTTATRAASQFGAREGDPIGAKVTLRGADAQSFLEKALPLVTISERQFDETGNFSFGVEEHTTFPSQEYDPQIGIYGLDVTVNLTRPGYRVTKRDKASQPIPSRHRLTPSDAVQFIESEFTVDITRVSADTRDGGDN</sequence>
<comment type="function">
    <text evidence="1">This is one of the proteins that bind and probably mediate the attachment of the 5S RNA into the large ribosomal subunit, where it forms part of the central protuberance. In the 70S ribosome it contacts protein S13 of the 30S subunit (bridge B1b), connecting the 2 subunits; this bridge is implicated in subunit movement. May contact the P site tRNA; the 5S rRNA and some of its associated proteins might help stabilize positioning of ribosome-bound tRNAs.</text>
</comment>
<comment type="subunit">
    <text evidence="1">Part of the 50S ribosomal subunit; contacts the 5S rRNA and probably tRNA. Forms a bridge to the 30S subunit in the 70S ribosome.</text>
</comment>
<comment type="similarity">
    <text evidence="1">Belongs to the universal ribosomal protein uL5 family.</text>
</comment>
<feature type="chain" id="PRO_0000365641" description="Large ribosomal subunit protein uL5">
    <location>
        <begin position="1"/>
        <end position="185"/>
    </location>
</feature>
<dbReference type="EMBL" id="AM180088">
    <property type="protein sequence ID" value="CAJ52936.1"/>
    <property type="molecule type" value="Genomic_DNA"/>
</dbReference>
<dbReference type="RefSeq" id="WP_011572049.1">
    <property type="nucleotide sequence ID" value="NC_008212.1"/>
</dbReference>
<dbReference type="SMR" id="Q18GG2"/>
<dbReference type="STRING" id="362976.HQ_2829A"/>
<dbReference type="GeneID" id="4194627"/>
<dbReference type="KEGG" id="hwa:HQ_2829A"/>
<dbReference type="eggNOG" id="arCOG04092">
    <property type="taxonomic scope" value="Archaea"/>
</dbReference>
<dbReference type="HOGENOM" id="CLU_061015_3_0_2"/>
<dbReference type="Proteomes" id="UP000001975">
    <property type="component" value="Chromosome"/>
</dbReference>
<dbReference type="GO" id="GO:1990904">
    <property type="term" value="C:ribonucleoprotein complex"/>
    <property type="evidence" value="ECO:0007669"/>
    <property type="project" value="UniProtKB-KW"/>
</dbReference>
<dbReference type="GO" id="GO:0005840">
    <property type="term" value="C:ribosome"/>
    <property type="evidence" value="ECO:0007669"/>
    <property type="project" value="UniProtKB-KW"/>
</dbReference>
<dbReference type="GO" id="GO:0019843">
    <property type="term" value="F:rRNA binding"/>
    <property type="evidence" value="ECO:0007669"/>
    <property type="project" value="UniProtKB-UniRule"/>
</dbReference>
<dbReference type="GO" id="GO:0003735">
    <property type="term" value="F:structural constituent of ribosome"/>
    <property type="evidence" value="ECO:0007669"/>
    <property type="project" value="InterPro"/>
</dbReference>
<dbReference type="GO" id="GO:0000049">
    <property type="term" value="F:tRNA binding"/>
    <property type="evidence" value="ECO:0007669"/>
    <property type="project" value="UniProtKB-UniRule"/>
</dbReference>
<dbReference type="GO" id="GO:0006412">
    <property type="term" value="P:translation"/>
    <property type="evidence" value="ECO:0007669"/>
    <property type="project" value="UniProtKB-UniRule"/>
</dbReference>
<dbReference type="FunFam" id="3.30.1440.10:FF:000002">
    <property type="entry name" value="60S ribosomal protein L11"/>
    <property type="match status" value="1"/>
</dbReference>
<dbReference type="Gene3D" id="3.30.1440.10">
    <property type="match status" value="1"/>
</dbReference>
<dbReference type="HAMAP" id="MF_01333_A">
    <property type="entry name" value="Ribosomal_uL5_A"/>
    <property type="match status" value="1"/>
</dbReference>
<dbReference type="InterPro" id="IPR002132">
    <property type="entry name" value="Ribosomal_uL5"/>
</dbReference>
<dbReference type="InterPro" id="IPR022804">
    <property type="entry name" value="Ribosomal_uL5_arc"/>
</dbReference>
<dbReference type="InterPro" id="IPR031309">
    <property type="entry name" value="Ribosomal_uL5_C"/>
</dbReference>
<dbReference type="InterPro" id="IPR022803">
    <property type="entry name" value="Ribosomal_uL5_dom_sf"/>
</dbReference>
<dbReference type="InterPro" id="IPR031310">
    <property type="entry name" value="Ribosomal_uL5_N"/>
</dbReference>
<dbReference type="NCBIfam" id="NF003258">
    <property type="entry name" value="PRK04219.1"/>
    <property type="match status" value="1"/>
</dbReference>
<dbReference type="PANTHER" id="PTHR11994">
    <property type="entry name" value="60S RIBOSOMAL PROTEIN L11-RELATED"/>
    <property type="match status" value="1"/>
</dbReference>
<dbReference type="Pfam" id="PF00281">
    <property type="entry name" value="Ribosomal_L5"/>
    <property type="match status" value="1"/>
</dbReference>
<dbReference type="Pfam" id="PF00673">
    <property type="entry name" value="Ribosomal_L5_C"/>
    <property type="match status" value="1"/>
</dbReference>
<dbReference type="PIRSF" id="PIRSF002161">
    <property type="entry name" value="Ribosomal_L5"/>
    <property type="match status" value="1"/>
</dbReference>
<dbReference type="SUPFAM" id="SSF55282">
    <property type="entry name" value="RL5-like"/>
    <property type="match status" value="1"/>
</dbReference>
<organism>
    <name type="scientific">Haloquadratum walsbyi (strain DSM 16790 / HBSQ001)</name>
    <dbReference type="NCBI Taxonomy" id="362976"/>
    <lineage>
        <taxon>Archaea</taxon>
        <taxon>Methanobacteriati</taxon>
        <taxon>Methanobacteriota</taxon>
        <taxon>Stenosarchaea group</taxon>
        <taxon>Halobacteria</taxon>
        <taxon>Halobacteriales</taxon>
        <taxon>Haloferacaceae</taxon>
        <taxon>Haloquadratum</taxon>
    </lineage>
</organism>
<keyword id="KW-1185">Reference proteome</keyword>
<keyword id="KW-0687">Ribonucleoprotein</keyword>
<keyword id="KW-0689">Ribosomal protein</keyword>
<keyword id="KW-0694">RNA-binding</keyword>
<keyword id="KW-0699">rRNA-binding</keyword>
<keyword id="KW-0820">tRNA-binding</keyword>
<evidence type="ECO:0000255" key="1">
    <source>
        <dbReference type="HAMAP-Rule" id="MF_01333"/>
    </source>
</evidence>
<evidence type="ECO:0000305" key="2"/>
<accession>Q18GG2</accession>
<protein>
    <recommendedName>
        <fullName evidence="1">Large ribosomal subunit protein uL5</fullName>
    </recommendedName>
    <alternativeName>
        <fullName evidence="2">50S ribosomal protein L5</fullName>
    </alternativeName>
</protein>
<proteinExistence type="inferred from homology"/>
<reference key="1">
    <citation type="journal article" date="2006" name="BMC Genomics">
        <title>The genome of the square archaeon Haloquadratum walsbyi: life at the limits of water activity.</title>
        <authorList>
            <person name="Bolhuis H."/>
            <person name="Palm P."/>
            <person name="Wende A."/>
            <person name="Falb M."/>
            <person name="Rampp M."/>
            <person name="Rodriguez-Valera F."/>
            <person name="Pfeiffer F."/>
            <person name="Oesterhelt D."/>
        </authorList>
    </citation>
    <scope>NUCLEOTIDE SEQUENCE [LARGE SCALE GENOMIC DNA]</scope>
    <source>
        <strain>DSM 16790 / HBSQ001</strain>
    </source>
</reference>
<name>RL5_HALWD</name>